<dbReference type="EC" id="1.1.1.37" evidence="1"/>
<dbReference type="EMBL" id="AE007869">
    <property type="protein sequence ID" value="AAK88360.2"/>
    <property type="molecule type" value="Genomic_DNA"/>
</dbReference>
<dbReference type="PIR" id="AF2900">
    <property type="entry name" value="AF2900"/>
</dbReference>
<dbReference type="PIR" id="G97675">
    <property type="entry name" value="G97675"/>
</dbReference>
<dbReference type="RefSeq" id="NP_355575.2">
    <property type="nucleotide sequence ID" value="NC_003062.2"/>
</dbReference>
<dbReference type="RefSeq" id="WP_010972455.1">
    <property type="nucleotide sequence ID" value="NC_003062.2"/>
</dbReference>
<dbReference type="SMR" id="Q7CWK7"/>
<dbReference type="STRING" id="176299.Atu2639"/>
<dbReference type="EnsemblBacteria" id="AAK88360">
    <property type="protein sequence ID" value="AAK88360"/>
    <property type="gene ID" value="Atu2639"/>
</dbReference>
<dbReference type="GeneID" id="1134677"/>
<dbReference type="KEGG" id="atu:Atu2639"/>
<dbReference type="PATRIC" id="fig|176299.10.peg.2643"/>
<dbReference type="eggNOG" id="COG0039">
    <property type="taxonomic scope" value="Bacteria"/>
</dbReference>
<dbReference type="HOGENOM" id="CLU_045401_2_1_5"/>
<dbReference type="OrthoDB" id="9802969at2"/>
<dbReference type="PhylomeDB" id="Q7CWK7"/>
<dbReference type="BioCyc" id="AGRO:ATU2639-MONOMER"/>
<dbReference type="Proteomes" id="UP000000813">
    <property type="component" value="Chromosome circular"/>
</dbReference>
<dbReference type="GO" id="GO:0004459">
    <property type="term" value="F:L-lactate dehydrogenase activity"/>
    <property type="evidence" value="ECO:0007669"/>
    <property type="project" value="TreeGrafter"/>
</dbReference>
<dbReference type="GO" id="GO:0030060">
    <property type="term" value="F:L-malate dehydrogenase (NAD+) activity"/>
    <property type="evidence" value="ECO:0007669"/>
    <property type="project" value="UniProtKB-UniRule"/>
</dbReference>
<dbReference type="GO" id="GO:0006089">
    <property type="term" value="P:lactate metabolic process"/>
    <property type="evidence" value="ECO:0007669"/>
    <property type="project" value="TreeGrafter"/>
</dbReference>
<dbReference type="GO" id="GO:0006099">
    <property type="term" value="P:tricarboxylic acid cycle"/>
    <property type="evidence" value="ECO:0007669"/>
    <property type="project" value="UniProtKB-UniRule"/>
</dbReference>
<dbReference type="CDD" id="cd01339">
    <property type="entry name" value="LDH-like_MDH"/>
    <property type="match status" value="1"/>
</dbReference>
<dbReference type="FunFam" id="3.40.50.720:FF:000018">
    <property type="entry name" value="Malate dehydrogenase"/>
    <property type="match status" value="1"/>
</dbReference>
<dbReference type="FunFam" id="3.90.110.10:FF:000004">
    <property type="entry name" value="Malate dehydrogenase"/>
    <property type="match status" value="1"/>
</dbReference>
<dbReference type="Gene3D" id="3.90.110.10">
    <property type="entry name" value="Lactate dehydrogenase/glycoside hydrolase, family 4, C-terminal"/>
    <property type="match status" value="1"/>
</dbReference>
<dbReference type="Gene3D" id="3.40.50.720">
    <property type="entry name" value="NAD(P)-binding Rossmann-like Domain"/>
    <property type="match status" value="1"/>
</dbReference>
<dbReference type="HAMAP" id="MF_00487">
    <property type="entry name" value="Malate_dehydrog_3"/>
    <property type="match status" value="1"/>
</dbReference>
<dbReference type="InterPro" id="IPR001557">
    <property type="entry name" value="L-lactate/malate_DH"/>
</dbReference>
<dbReference type="InterPro" id="IPR022383">
    <property type="entry name" value="Lactate/malate_DH_C"/>
</dbReference>
<dbReference type="InterPro" id="IPR001236">
    <property type="entry name" value="Lactate/malate_DH_N"/>
</dbReference>
<dbReference type="InterPro" id="IPR015955">
    <property type="entry name" value="Lactate_DH/Glyco_Ohase_4_C"/>
</dbReference>
<dbReference type="InterPro" id="IPR011275">
    <property type="entry name" value="Malate_DH_type3"/>
</dbReference>
<dbReference type="InterPro" id="IPR036291">
    <property type="entry name" value="NAD(P)-bd_dom_sf"/>
</dbReference>
<dbReference type="NCBIfam" id="TIGR01763">
    <property type="entry name" value="MalateDH_bact"/>
    <property type="match status" value="1"/>
</dbReference>
<dbReference type="NCBIfam" id="NF004863">
    <property type="entry name" value="PRK06223.1"/>
    <property type="match status" value="1"/>
</dbReference>
<dbReference type="PANTHER" id="PTHR43128">
    <property type="entry name" value="L-2-HYDROXYCARBOXYLATE DEHYDROGENASE (NAD(P)(+))"/>
    <property type="match status" value="1"/>
</dbReference>
<dbReference type="PANTHER" id="PTHR43128:SF16">
    <property type="entry name" value="L-LACTATE DEHYDROGENASE"/>
    <property type="match status" value="1"/>
</dbReference>
<dbReference type="Pfam" id="PF02866">
    <property type="entry name" value="Ldh_1_C"/>
    <property type="match status" value="1"/>
</dbReference>
<dbReference type="Pfam" id="PF00056">
    <property type="entry name" value="Ldh_1_N"/>
    <property type="match status" value="1"/>
</dbReference>
<dbReference type="PIRSF" id="PIRSF000102">
    <property type="entry name" value="Lac_mal_DH"/>
    <property type="match status" value="1"/>
</dbReference>
<dbReference type="PRINTS" id="PR00086">
    <property type="entry name" value="LLDHDRGNASE"/>
</dbReference>
<dbReference type="SUPFAM" id="SSF56327">
    <property type="entry name" value="LDH C-terminal domain-like"/>
    <property type="match status" value="1"/>
</dbReference>
<dbReference type="SUPFAM" id="SSF51735">
    <property type="entry name" value="NAD(P)-binding Rossmann-fold domains"/>
    <property type="match status" value="1"/>
</dbReference>
<protein>
    <recommendedName>
        <fullName evidence="1">Malate dehydrogenase</fullName>
        <ecNumber evidence="1">1.1.1.37</ecNumber>
    </recommendedName>
</protein>
<reference key="1">
    <citation type="journal article" date="2001" name="Science">
        <title>The genome of the natural genetic engineer Agrobacterium tumefaciens C58.</title>
        <authorList>
            <person name="Wood D.W."/>
            <person name="Setubal J.C."/>
            <person name="Kaul R."/>
            <person name="Monks D.E."/>
            <person name="Kitajima J.P."/>
            <person name="Okura V.K."/>
            <person name="Zhou Y."/>
            <person name="Chen L."/>
            <person name="Wood G.E."/>
            <person name="Almeida N.F. Jr."/>
            <person name="Woo L."/>
            <person name="Chen Y."/>
            <person name="Paulsen I.T."/>
            <person name="Eisen J.A."/>
            <person name="Karp P.D."/>
            <person name="Bovee D. Sr."/>
            <person name="Chapman P."/>
            <person name="Clendenning J."/>
            <person name="Deatherage G."/>
            <person name="Gillet W."/>
            <person name="Grant C."/>
            <person name="Kutyavin T."/>
            <person name="Levy R."/>
            <person name="Li M.-J."/>
            <person name="McClelland E."/>
            <person name="Palmieri A."/>
            <person name="Raymond C."/>
            <person name="Rouse G."/>
            <person name="Saenphimmachak C."/>
            <person name="Wu Z."/>
            <person name="Romero P."/>
            <person name="Gordon D."/>
            <person name="Zhang S."/>
            <person name="Yoo H."/>
            <person name="Tao Y."/>
            <person name="Biddle P."/>
            <person name="Jung M."/>
            <person name="Krespan W."/>
            <person name="Perry M."/>
            <person name="Gordon-Kamm B."/>
            <person name="Liao L."/>
            <person name="Kim S."/>
            <person name="Hendrick C."/>
            <person name="Zhao Z.-Y."/>
            <person name="Dolan M."/>
            <person name="Chumley F."/>
            <person name="Tingey S.V."/>
            <person name="Tomb J.-F."/>
            <person name="Gordon M.P."/>
            <person name="Olson M.V."/>
            <person name="Nester E.W."/>
        </authorList>
    </citation>
    <scope>NUCLEOTIDE SEQUENCE [LARGE SCALE GENOMIC DNA]</scope>
    <source>
        <strain>C58 / ATCC 33970</strain>
    </source>
</reference>
<reference key="2">
    <citation type="journal article" date="2001" name="Science">
        <title>Genome sequence of the plant pathogen and biotechnology agent Agrobacterium tumefaciens C58.</title>
        <authorList>
            <person name="Goodner B."/>
            <person name="Hinkle G."/>
            <person name="Gattung S."/>
            <person name="Miller N."/>
            <person name="Blanchard M."/>
            <person name="Qurollo B."/>
            <person name="Goldman B.S."/>
            <person name="Cao Y."/>
            <person name="Askenazi M."/>
            <person name="Halling C."/>
            <person name="Mullin L."/>
            <person name="Houmiel K."/>
            <person name="Gordon J."/>
            <person name="Vaudin M."/>
            <person name="Iartchouk O."/>
            <person name="Epp A."/>
            <person name="Liu F."/>
            <person name="Wollam C."/>
            <person name="Allinger M."/>
            <person name="Doughty D."/>
            <person name="Scott C."/>
            <person name="Lappas C."/>
            <person name="Markelz B."/>
            <person name="Flanagan C."/>
            <person name="Crowell C."/>
            <person name="Gurson J."/>
            <person name="Lomo C."/>
            <person name="Sear C."/>
            <person name="Strub G."/>
            <person name="Cielo C."/>
            <person name="Slater S."/>
        </authorList>
    </citation>
    <scope>NUCLEOTIDE SEQUENCE [LARGE SCALE GENOMIC DNA]</scope>
    <source>
        <strain>C58 / ATCC 33970</strain>
    </source>
</reference>
<organism>
    <name type="scientific">Agrobacterium fabrum (strain C58 / ATCC 33970)</name>
    <name type="common">Agrobacterium tumefaciens (strain C58)</name>
    <dbReference type="NCBI Taxonomy" id="176299"/>
    <lineage>
        <taxon>Bacteria</taxon>
        <taxon>Pseudomonadati</taxon>
        <taxon>Pseudomonadota</taxon>
        <taxon>Alphaproteobacteria</taxon>
        <taxon>Hyphomicrobiales</taxon>
        <taxon>Rhizobiaceae</taxon>
        <taxon>Rhizobium/Agrobacterium group</taxon>
        <taxon>Agrobacterium</taxon>
        <taxon>Agrobacterium tumefaciens complex</taxon>
    </lineage>
</organism>
<name>MDH_AGRFC</name>
<feature type="chain" id="PRO_0000113419" description="Malate dehydrogenase">
    <location>
        <begin position="1"/>
        <end position="320"/>
    </location>
</feature>
<feature type="active site" description="Proton acceptor" evidence="1">
    <location>
        <position position="176"/>
    </location>
</feature>
<feature type="binding site" evidence="1">
    <location>
        <begin position="10"/>
        <end position="15"/>
    </location>
    <ligand>
        <name>NAD(+)</name>
        <dbReference type="ChEBI" id="CHEBI:57540"/>
    </ligand>
</feature>
<feature type="binding site" evidence="1">
    <location>
        <position position="34"/>
    </location>
    <ligand>
        <name>NAD(+)</name>
        <dbReference type="ChEBI" id="CHEBI:57540"/>
    </ligand>
</feature>
<feature type="binding site" evidence="1">
    <location>
        <position position="83"/>
    </location>
    <ligand>
        <name>substrate</name>
    </ligand>
</feature>
<feature type="binding site" evidence="1">
    <location>
        <position position="89"/>
    </location>
    <ligand>
        <name>substrate</name>
    </ligand>
</feature>
<feature type="binding site" evidence="1">
    <location>
        <position position="96"/>
    </location>
    <ligand>
        <name>NAD(+)</name>
        <dbReference type="ChEBI" id="CHEBI:57540"/>
    </ligand>
</feature>
<feature type="binding site" evidence="1">
    <location>
        <begin position="119"/>
        <end position="121"/>
    </location>
    <ligand>
        <name>NAD(+)</name>
        <dbReference type="ChEBI" id="CHEBI:57540"/>
    </ligand>
</feature>
<feature type="binding site" evidence="1">
    <location>
        <position position="121"/>
    </location>
    <ligand>
        <name>substrate</name>
    </ligand>
</feature>
<feature type="binding site" evidence="1">
    <location>
        <position position="152"/>
    </location>
    <ligand>
        <name>substrate</name>
    </ligand>
</feature>
<sequence length="320" mass="33537">MARKKIALIGSGMIGGTLAHLASLKELGDIVLFDIADGIPQGKGLDIAQSGPVEGFNAKLSGASDYAAIEGADVCIVTAGVARKPGMSRDDLLGINLKVMEQVGAGIKKYAPNAFVICITNPLDAMVWALQKFSGLPKNKVVGMAGVLDSARFRLFLAEEFNVSVQDVTAFVLGGHGDTMVPLARYSTVGGVPLTDLVKMGWLTAERLEQIIQRTRDGGAEIVGLLKTGSAYYAPAASAIEMAESYLKDKKRVLPAAAHLSGQYGVDDMYVGVPTIIGAGGIERVIEIELNKEEEAAFQKSVGAVAGLCEACINIAPSLK</sequence>
<accession>Q7CWK7</accession>
<accession>Q8UC59</accession>
<proteinExistence type="inferred from homology"/>
<gene>
    <name evidence="1" type="primary">mdh</name>
    <name type="ordered locus">Atu2639</name>
    <name type="ORF">AGR_C_4782</name>
</gene>
<evidence type="ECO:0000255" key="1">
    <source>
        <dbReference type="HAMAP-Rule" id="MF_00487"/>
    </source>
</evidence>
<keyword id="KW-0520">NAD</keyword>
<keyword id="KW-0560">Oxidoreductase</keyword>
<keyword id="KW-1185">Reference proteome</keyword>
<keyword id="KW-0816">Tricarboxylic acid cycle</keyword>
<comment type="function">
    <text evidence="1">Catalyzes the reversible oxidation of malate to oxaloacetate.</text>
</comment>
<comment type="catalytic activity">
    <reaction evidence="1">
        <text>(S)-malate + NAD(+) = oxaloacetate + NADH + H(+)</text>
        <dbReference type="Rhea" id="RHEA:21432"/>
        <dbReference type="ChEBI" id="CHEBI:15378"/>
        <dbReference type="ChEBI" id="CHEBI:15589"/>
        <dbReference type="ChEBI" id="CHEBI:16452"/>
        <dbReference type="ChEBI" id="CHEBI:57540"/>
        <dbReference type="ChEBI" id="CHEBI:57945"/>
        <dbReference type="EC" id="1.1.1.37"/>
    </reaction>
</comment>
<comment type="similarity">
    <text evidence="1">Belongs to the LDH/MDH superfamily. MDH type 3 family.</text>
</comment>